<dbReference type="EMBL" id="U71294">
    <property type="protein sequence ID" value="AAC53019.1"/>
    <property type="molecule type" value="mRNA"/>
</dbReference>
<dbReference type="RefSeq" id="NP_620190.1">
    <property type="nucleotide sequence ID" value="NM_138835.1"/>
</dbReference>
<dbReference type="RefSeq" id="XP_038947967.1">
    <property type="nucleotide sequence ID" value="XM_039092039.2"/>
</dbReference>
<dbReference type="SMR" id="P97610"/>
<dbReference type="BioGRID" id="251324">
    <property type="interactions" value="1"/>
</dbReference>
<dbReference type="FunCoup" id="P97610">
    <property type="interactions" value="1130"/>
</dbReference>
<dbReference type="IntAct" id="P97610">
    <property type="interactions" value="1"/>
</dbReference>
<dbReference type="MINT" id="P97610"/>
<dbReference type="STRING" id="10116.ENSRNOP00000026153"/>
<dbReference type="iPTMnet" id="P97610"/>
<dbReference type="PhosphoSitePlus" id="P97610"/>
<dbReference type="PaxDb" id="10116-ENSRNOP00000026153"/>
<dbReference type="ABCD" id="P97610">
    <property type="antibodies" value="1 sequenced antibody"/>
</dbReference>
<dbReference type="Ensembl" id="ENSRNOT00000026152.7">
    <property type="protein sequence ID" value="ENSRNOP00000026153.3"/>
    <property type="gene ID" value="ENSRNOG00000019306.7"/>
</dbReference>
<dbReference type="GeneID" id="191595"/>
<dbReference type="KEGG" id="rno:191595"/>
<dbReference type="UCSC" id="RGD:621876">
    <property type="organism name" value="rat"/>
</dbReference>
<dbReference type="AGR" id="RGD:621876"/>
<dbReference type="CTD" id="91683"/>
<dbReference type="RGD" id="621876">
    <property type="gene designation" value="Syt12"/>
</dbReference>
<dbReference type="eggNOG" id="KOG1028">
    <property type="taxonomic scope" value="Eukaryota"/>
</dbReference>
<dbReference type="GeneTree" id="ENSGT00940000158627"/>
<dbReference type="HOGENOM" id="CLU_053862_0_0_1"/>
<dbReference type="InParanoid" id="P97610"/>
<dbReference type="OMA" id="LQPFGGW"/>
<dbReference type="OrthoDB" id="67700at2759"/>
<dbReference type="PhylomeDB" id="P97610"/>
<dbReference type="TreeFam" id="TF315600"/>
<dbReference type="PRO" id="PR:P97610"/>
<dbReference type="Proteomes" id="UP000002494">
    <property type="component" value="Chromosome 1"/>
</dbReference>
<dbReference type="Bgee" id="ENSRNOG00000019306">
    <property type="expression patterns" value="Expressed in cerebellum and 11 other cell types or tissues"/>
</dbReference>
<dbReference type="GO" id="GO:0070382">
    <property type="term" value="C:exocytic vesicle"/>
    <property type="evidence" value="ECO:0000318"/>
    <property type="project" value="GO_Central"/>
</dbReference>
<dbReference type="GO" id="GO:0098686">
    <property type="term" value="C:hippocampal mossy fiber to CA3 synapse"/>
    <property type="evidence" value="ECO:0000266"/>
    <property type="project" value="RGD"/>
</dbReference>
<dbReference type="GO" id="GO:0005886">
    <property type="term" value="C:plasma membrane"/>
    <property type="evidence" value="ECO:0000318"/>
    <property type="project" value="GO_Central"/>
</dbReference>
<dbReference type="GO" id="GO:0098793">
    <property type="term" value="C:presynapse"/>
    <property type="evidence" value="ECO:0000314"/>
    <property type="project" value="UniProtKB"/>
</dbReference>
<dbReference type="GO" id="GO:0008021">
    <property type="term" value="C:synaptic vesicle"/>
    <property type="evidence" value="ECO:0000266"/>
    <property type="project" value="RGD"/>
</dbReference>
<dbReference type="GO" id="GO:0030672">
    <property type="term" value="C:synaptic vesicle membrane"/>
    <property type="evidence" value="ECO:0000266"/>
    <property type="project" value="RGD"/>
</dbReference>
<dbReference type="GO" id="GO:0061891">
    <property type="term" value="F:calcium ion sensor activity"/>
    <property type="evidence" value="ECO:0000318"/>
    <property type="project" value="GO_Central"/>
</dbReference>
<dbReference type="GO" id="GO:0005544">
    <property type="term" value="F:calcium-dependent phospholipid binding"/>
    <property type="evidence" value="ECO:0000318"/>
    <property type="project" value="GO_Central"/>
</dbReference>
<dbReference type="GO" id="GO:0000149">
    <property type="term" value="F:SNARE binding"/>
    <property type="evidence" value="ECO:0000318"/>
    <property type="project" value="GO_Central"/>
</dbReference>
<dbReference type="GO" id="GO:0060291">
    <property type="term" value="P:long-term synaptic potentiation"/>
    <property type="evidence" value="ECO:0000266"/>
    <property type="project" value="RGD"/>
</dbReference>
<dbReference type="GO" id="GO:0099171">
    <property type="term" value="P:presynaptic modulation of chemical synaptic transmission"/>
    <property type="evidence" value="ECO:0000266"/>
    <property type="project" value="RGD"/>
</dbReference>
<dbReference type="GO" id="GO:0017158">
    <property type="term" value="P:regulation of calcium ion-dependent exocytosis"/>
    <property type="evidence" value="ECO:0000318"/>
    <property type="project" value="GO_Central"/>
</dbReference>
<dbReference type="GO" id="GO:0046928">
    <property type="term" value="P:regulation of neurotransmitter secretion"/>
    <property type="evidence" value="ECO:0000303"/>
    <property type="project" value="RGD"/>
</dbReference>
<dbReference type="GO" id="GO:0048792">
    <property type="term" value="P:spontaneous exocytosis of neurotransmitter"/>
    <property type="evidence" value="ECO:0000314"/>
    <property type="project" value="GO_Central"/>
</dbReference>
<dbReference type="GO" id="GO:0016192">
    <property type="term" value="P:vesicle-mediated transport"/>
    <property type="evidence" value="ECO:0000318"/>
    <property type="project" value="GO_Central"/>
</dbReference>
<dbReference type="CDD" id="cd08406">
    <property type="entry name" value="C2B_Synaptotagmin-12"/>
    <property type="match status" value="1"/>
</dbReference>
<dbReference type="FunFam" id="2.60.40.150:FF:000080">
    <property type="entry name" value="Putative synaptotagmin-12"/>
    <property type="match status" value="1"/>
</dbReference>
<dbReference type="FunFam" id="2.60.40.150:FF:000129">
    <property type="entry name" value="Synaptotagmin 12"/>
    <property type="match status" value="1"/>
</dbReference>
<dbReference type="Gene3D" id="2.60.40.150">
    <property type="entry name" value="C2 domain"/>
    <property type="match status" value="2"/>
</dbReference>
<dbReference type="InterPro" id="IPR000008">
    <property type="entry name" value="C2_dom"/>
</dbReference>
<dbReference type="InterPro" id="IPR035892">
    <property type="entry name" value="C2_domain_sf"/>
</dbReference>
<dbReference type="InterPro" id="IPR030537">
    <property type="entry name" value="Syt12_C2B"/>
</dbReference>
<dbReference type="PANTHER" id="PTHR10024">
    <property type="entry name" value="SYNAPTOTAGMIN"/>
    <property type="match status" value="1"/>
</dbReference>
<dbReference type="PANTHER" id="PTHR10024:SF252">
    <property type="entry name" value="SYNAPTOTAGMIN-12"/>
    <property type="match status" value="1"/>
</dbReference>
<dbReference type="Pfam" id="PF00168">
    <property type="entry name" value="C2"/>
    <property type="match status" value="2"/>
</dbReference>
<dbReference type="SMART" id="SM00239">
    <property type="entry name" value="C2"/>
    <property type="match status" value="2"/>
</dbReference>
<dbReference type="SUPFAM" id="SSF49562">
    <property type="entry name" value="C2 domain (Calcium/lipid-binding domain, CaLB)"/>
    <property type="match status" value="2"/>
</dbReference>
<dbReference type="PROSITE" id="PS50004">
    <property type="entry name" value="C2"/>
    <property type="match status" value="2"/>
</dbReference>
<feature type="chain" id="PRO_0000183974" description="Synaptotagmin-12">
    <location>
        <begin position="1"/>
        <end position="421"/>
    </location>
</feature>
<feature type="topological domain" description="Vesicular" evidence="3">
    <location>
        <begin position="1"/>
        <end position="18"/>
    </location>
</feature>
<feature type="transmembrane region" description="Helical" evidence="3">
    <location>
        <begin position="19"/>
        <end position="39"/>
    </location>
</feature>
<feature type="topological domain" description="Cytoplasmic" evidence="3">
    <location>
        <begin position="40"/>
        <end position="421"/>
    </location>
</feature>
<feature type="domain" description="C2 1" evidence="4">
    <location>
        <begin position="152"/>
        <end position="272"/>
    </location>
</feature>
<feature type="domain" description="C2 2" evidence="4">
    <location>
        <begin position="283"/>
        <end position="416"/>
    </location>
</feature>
<feature type="modified residue" description="Phosphoserine; by PKA" evidence="5 9">
    <location>
        <position position="97"/>
    </location>
</feature>
<feature type="modified residue" description="Phosphoserine" evidence="9">
    <location>
        <position position="99"/>
    </location>
</feature>
<feature type="modified residue" description="Phosphoserine" evidence="9">
    <location>
        <position position="214"/>
    </location>
</feature>
<feature type="mutagenesis site" description="No effect on phosphorylation by PKA." evidence="5">
    <original>T</original>
    <variation>A</variation>
    <location>
        <position position="87"/>
    </location>
</feature>
<feature type="mutagenesis site" description="Loss of phosphorylation by PKA. No effect on localization to synapse. Inhibits the spontaneous release of neurotransmitters." evidence="5">
    <original>S</original>
    <variation>A</variation>
    <location>
        <position position="97"/>
    </location>
</feature>
<comment type="function">
    <text evidence="1 5">Synaptic vesicle phosphoprotein that enhances spontaneous neurotransmitter release but does not effect induced neurotransmitter release (PubMed:17190793). Unlike other synaptotagmins, it does not bind Ca(2+) or phospholipids (PubMed:17190793). Essential for mossy-fiber long-term potentiation in the hippocampus (By similarity).</text>
</comment>
<comment type="subunit">
    <text evidence="2 5">Homodimer (By similarity). Can also form heterodimers (By similarity). Interacts with SYT1 (PubMed:17190793).</text>
</comment>
<comment type="subcellular location">
    <subcellularLocation>
        <location evidence="5">Cytoplasmic vesicle</location>
        <location evidence="5">Secretory vesicle</location>
        <location evidence="5">Synaptic vesicle membrane</location>
        <topology evidence="3">Single-pass membrane protein</topology>
    </subcellularLocation>
</comment>
<comment type="tissue specificity">
    <text evidence="5">Expressed in the brain, specifically in neurons of the cerebellum, cortex, hippocampus, olfactory bulb, brainstem and spinal cord (at protein level).</text>
</comment>
<comment type="PTM">
    <text evidence="1">Phosphorylation of Ser-97 is required for mossy-fiber long-term potentiation.</text>
</comment>
<comment type="similarity">
    <text evidence="8">Belongs to the synaptotagmin family.</text>
</comment>
<comment type="caution">
    <text evidence="5">Unlike classical synaptotagmins, lacks Ca(2+)-binding sequences and does not bind phospholipids.</text>
</comment>
<name>SYT12_RAT</name>
<accession>P97610</accession>
<keyword id="KW-0968">Cytoplasmic vesicle</keyword>
<keyword id="KW-0472">Membrane</keyword>
<keyword id="KW-0597">Phosphoprotein</keyword>
<keyword id="KW-1185">Reference proteome</keyword>
<keyword id="KW-0677">Repeat</keyword>
<keyword id="KW-0770">Synapse</keyword>
<keyword id="KW-0812">Transmembrane</keyword>
<keyword id="KW-1133">Transmembrane helix</keyword>
<evidence type="ECO:0000250" key="1">
    <source>
        <dbReference type="UniProtKB" id="Q920N7"/>
    </source>
</evidence>
<evidence type="ECO:0000250" key="2">
    <source>
        <dbReference type="UniProtKB" id="Q9R0N7"/>
    </source>
</evidence>
<evidence type="ECO:0000255" key="3"/>
<evidence type="ECO:0000255" key="4">
    <source>
        <dbReference type="PROSITE-ProRule" id="PRU00041"/>
    </source>
</evidence>
<evidence type="ECO:0000269" key="5">
    <source>
    </source>
</evidence>
<evidence type="ECO:0000303" key="6">
    <source>
    </source>
</evidence>
<evidence type="ECO:0000303" key="7">
    <source>
    </source>
</evidence>
<evidence type="ECO:0000305" key="8"/>
<evidence type="ECO:0007744" key="9">
    <source>
    </source>
</evidence>
<protein>
    <recommendedName>
        <fullName evidence="6">Synaptotagmin-12</fullName>
    </recommendedName>
    <alternativeName>
        <fullName evidence="1">Synaptotagmin XII</fullName>
        <shortName evidence="1">SytXII</shortName>
    </alternativeName>
    <alternativeName>
        <fullName evidence="7">Synaptotagmin-related gene 1 protein</fullName>
        <shortName evidence="7">Srg1</shortName>
    </alternativeName>
</protein>
<proteinExistence type="evidence at protein level"/>
<reference key="1">
    <citation type="journal article" date="1996" name="J. Neurosci.">
        <title>Thyroid hormone-responsive genes in developing cerebellum include a novel synaptotagmin and a hairless homolog.</title>
        <authorList>
            <person name="Thompson C.C."/>
        </authorList>
    </citation>
    <scope>NUCLEOTIDE SEQUENCE [MRNA]</scope>
    <source>
        <strain>Sprague-Dawley</strain>
    </source>
</reference>
<reference key="2">
    <citation type="journal article" date="2007" name="J. Cell Biol.">
        <title>Synaptotagmin-12, a synaptic vesicle phosphoprotein that modulates spontaneous neurotransmitter release.</title>
        <authorList>
            <person name="Maximov A."/>
            <person name="Shin O.H."/>
            <person name="Liu X."/>
            <person name="Suedhof T.C."/>
        </authorList>
    </citation>
    <scope>FUNCTION</scope>
    <scope>INTERACTION WITH SYT1</scope>
    <scope>SUBCELLULAR LOCATION</scope>
    <scope>TISSUE SPECIFICITY</scope>
    <scope>PHOSPHORYLATION AT SER-97</scope>
    <scope>MUTAGENESIS OF THR-87 AND SER-97</scope>
</reference>
<reference key="3">
    <citation type="journal article" date="2012" name="Nat. Commun.">
        <title>Quantitative maps of protein phosphorylation sites across 14 different rat organs and tissues.</title>
        <authorList>
            <person name="Lundby A."/>
            <person name="Secher A."/>
            <person name="Lage K."/>
            <person name="Nordsborg N.B."/>
            <person name="Dmytriyev A."/>
            <person name="Lundby C."/>
            <person name="Olsen J.V."/>
        </authorList>
    </citation>
    <scope>PHOSPHORYLATION [LARGE SCALE ANALYSIS] AT SER-97; SER-99 AND SER-214</scope>
    <scope>IDENTIFICATION BY MASS SPECTROMETRY [LARGE SCALE ANALYSIS]</scope>
</reference>
<sequence>MAVDVTEYHLSVIKSPPGWEVGVYAAGALALLGIAAVSLWKLWTSGSFPSPSPFPNYDYRYLQQKYGEAYVEAKLKRVPPWNAQRTTTRGPPSRKGSLSIEDTFESISELGPLELMGRELDLAPYGTLRKSQSADSLNSISSVSNTFGQDFTLGQVEVSMDYDGASHTLHVAVLQGKDLLEREEATFESCFMRVSLLPDEQIVGISRIQRNAYSIFFDEKFSVPLDPTALEEKSLRFSVFGIDEDERNVSTGVVELKLSVLDLPLQPFSGWLYLQDQNKAADAVGEILLSLSYLPTAERLTVVVVKAKNLIWTNDKTTADPFVKVYLLQDGRKMSKKKTAVKRDDPNPVFNEAMIFSVPAIVLQDLSLRVTVAESSSDGRGDNVGHVIIGPGASGMGTTHWNQMLATLRRPVSMWHPVRRN</sequence>
<gene>
    <name evidence="6" type="primary">Syt12</name>
    <name evidence="7" type="synonym">Srg1</name>
    <name type="synonym">Sytr1</name>
</gene>
<organism>
    <name type="scientific">Rattus norvegicus</name>
    <name type="common">Rat</name>
    <dbReference type="NCBI Taxonomy" id="10116"/>
    <lineage>
        <taxon>Eukaryota</taxon>
        <taxon>Metazoa</taxon>
        <taxon>Chordata</taxon>
        <taxon>Craniata</taxon>
        <taxon>Vertebrata</taxon>
        <taxon>Euteleostomi</taxon>
        <taxon>Mammalia</taxon>
        <taxon>Eutheria</taxon>
        <taxon>Euarchontoglires</taxon>
        <taxon>Glires</taxon>
        <taxon>Rodentia</taxon>
        <taxon>Myomorpha</taxon>
        <taxon>Muroidea</taxon>
        <taxon>Muridae</taxon>
        <taxon>Murinae</taxon>
        <taxon>Rattus</taxon>
    </lineage>
</organism>